<name>PYRG_SHESW</name>
<sequence>MTTRYIFVTGGVVSSLGKGIAAASLAAILEARGLNVTIMKLDPYINVDPGTMSPTQHGEVFVTEDGAETDLDLGHYERFIRTKMNRRNNFTTGRIYEEVLRKERRGDYLGATIQVIPHITNAIKEKVLAGGEGHDVAIVEIGGTVGDIESLPFLESIRQLGVELGRDRTLFMHLTLVPFLGAAGEVKTKPTQHSVKELRSIGIAPDVLICRGDRAIPANERAKISLFCNVEERAVISLKDVDSIYKIPALLRSQGLDDLVVKRFGLECREADLSEWENVIYQEANPNGEVVIGMVGKYIELPDAYKSVNEALKHAGLKNRVSVTIKYIDSQTVEAKGDEVLQGLDGILVPGGFGERGVEGKILAAKFARENKLPYFGICLGMQVALIEFARNVAGMTDAHSTEFNKETPFPVVGLITEWVDEEGNVEQRHEASDLGGTMRLGAQLCHLLEGSKAAQAYKGNSCIERHRHRYEVNNKYRERLEQAGMVFSGLSSDRKLVEMIELKDHPWFVAGQFHPEFTSTPRDGHPLFEGFIAAASAHQKRDLK</sequence>
<feature type="chain" id="PRO_1000139577" description="CTP synthase">
    <location>
        <begin position="1"/>
        <end position="545"/>
    </location>
</feature>
<feature type="domain" description="Glutamine amidotransferase type-1" evidence="1">
    <location>
        <begin position="291"/>
        <end position="542"/>
    </location>
</feature>
<feature type="region of interest" description="Amidoligase domain" evidence="1">
    <location>
        <begin position="1"/>
        <end position="266"/>
    </location>
</feature>
<feature type="active site" description="Nucleophile; for glutamine hydrolysis" evidence="1">
    <location>
        <position position="379"/>
    </location>
</feature>
<feature type="active site" evidence="1">
    <location>
        <position position="515"/>
    </location>
</feature>
<feature type="active site" evidence="1">
    <location>
        <position position="517"/>
    </location>
</feature>
<feature type="binding site" evidence="1">
    <location>
        <position position="14"/>
    </location>
    <ligand>
        <name>CTP</name>
        <dbReference type="ChEBI" id="CHEBI:37563"/>
        <note>allosteric inhibitor</note>
    </ligand>
</feature>
<feature type="binding site" evidence="1">
    <location>
        <position position="14"/>
    </location>
    <ligand>
        <name>UTP</name>
        <dbReference type="ChEBI" id="CHEBI:46398"/>
    </ligand>
</feature>
<feature type="binding site" evidence="1">
    <location>
        <begin position="15"/>
        <end position="20"/>
    </location>
    <ligand>
        <name>ATP</name>
        <dbReference type="ChEBI" id="CHEBI:30616"/>
    </ligand>
</feature>
<feature type="binding site" evidence="1">
    <location>
        <position position="72"/>
    </location>
    <ligand>
        <name>ATP</name>
        <dbReference type="ChEBI" id="CHEBI:30616"/>
    </ligand>
</feature>
<feature type="binding site" evidence="1">
    <location>
        <position position="72"/>
    </location>
    <ligand>
        <name>Mg(2+)</name>
        <dbReference type="ChEBI" id="CHEBI:18420"/>
    </ligand>
</feature>
<feature type="binding site" evidence="1">
    <location>
        <position position="140"/>
    </location>
    <ligand>
        <name>Mg(2+)</name>
        <dbReference type="ChEBI" id="CHEBI:18420"/>
    </ligand>
</feature>
<feature type="binding site" evidence="1">
    <location>
        <begin position="147"/>
        <end position="149"/>
    </location>
    <ligand>
        <name>CTP</name>
        <dbReference type="ChEBI" id="CHEBI:37563"/>
        <note>allosteric inhibitor</note>
    </ligand>
</feature>
<feature type="binding site" evidence="1">
    <location>
        <begin position="187"/>
        <end position="192"/>
    </location>
    <ligand>
        <name>CTP</name>
        <dbReference type="ChEBI" id="CHEBI:37563"/>
        <note>allosteric inhibitor</note>
    </ligand>
</feature>
<feature type="binding site" evidence="1">
    <location>
        <begin position="187"/>
        <end position="192"/>
    </location>
    <ligand>
        <name>UTP</name>
        <dbReference type="ChEBI" id="CHEBI:46398"/>
    </ligand>
</feature>
<feature type="binding site" evidence="1">
    <location>
        <position position="223"/>
    </location>
    <ligand>
        <name>CTP</name>
        <dbReference type="ChEBI" id="CHEBI:37563"/>
        <note>allosteric inhibitor</note>
    </ligand>
</feature>
<feature type="binding site" evidence="1">
    <location>
        <position position="223"/>
    </location>
    <ligand>
        <name>UTP</name>
        <dbReference type="ChEBI" id="CHEBI:46398"/>
    </ligand>
</feature>
<feature type="binding site" evidence="1">
    <location>
        <begin position="239"/>
        <end position="241"/>
    </location>
    <ligand>
        <name>ATP</name>
        <dbReference type="ChEBI" id="CHEBI:30616"/>
    </ligand>
</feature>
<feature type="binding site" evidence="1">
    <location>
        <position position="352"/>
    </location>
    <ligand>
        <name>L-glutamine</name>
        <dbReference type="ChEBI" id="CHEBI:58359"/>
    </ligand>
</feature>
<feature type="binding site" evidence="1">
    <location>
        <begin position="380"/>
        <end position="383"/>
    </location>
    <ligand>
        <name>L-glutamine</name>
        <dbReference type="ChEBI" id="CHEBI:58359"/>
    </ligand>
</feature>
<feature type="binding site" evidence="1">
    <location>
        <position position="403"/>
    </location>
    <ligand>
        <name>L-glutamine</name>
        <dbReference type="ChEBI" id="CHEBI:58359"/>
    </ligand>
</feature>
<feature type="binding site" evidence="1">
    <location>
        <position position="470"/>
    </location>
    <ligand>
        <name>L-glutamine</name>
        <dbReference type="ChEBI" id="CHEBI:58359"/>
    </ligand>
</feature>
<reference key="1">
    <citation type="submission" date="2006-12" db="EMBL/GenBank/DDBJ databases">
        <title>Complete sequence of Shewanella sp. W3-18-1.</title>
        <authorList>
            <consortium name="US DOE Joint Genome Institute"/>
            <person name="Copeland A."/>
            <person name="Lucas S."/>
            <person name="Lapidus A."/>
            <person name="Barry K."/>
            <person name="Detter J.C."/>
            <person name="Glavina del Rio T."/>
            <person name="Hammon N."/>
            <person name="Israni S."/>
            <person name="Dalin E."/>
            <person name="Tice H."/>
            <person name="Pitluck S."/>
            <person name="Chain P."/>
            <person name="Malfatti S."/>
            <person name="Shin M."/>
            <person name="Vergez L."/>
            <person name="Schmutz J."/>
            <person name="Larimer F."/>
            <person name="Land M."/>
            <person name="Hauser L."/>
            <person name="Kyrpides N."/>
            <person name="Lykidis A."/>
            <person name="Tiedje J."/>
            <person name="Richardson P."/>
        </authorList>
    </citation>
    <scope>NUCLEOTIDE SEQUENCE [LARGE SCALE GENOMIC DNA]</scope>
    <source>
        <strain>W3-18-1</strain>
    </source>
</reference>
<proteinExistence type="inferred from homology"/>
<dbReference type="EC" id="6.3.4.2" evidence="1"/>
<dbReference type="EMBL" id="CP000503">
    <property type="protein sequence ID" value="ABM24097.1"/>
    <property type="molecule type" value="Genomic_DNA"/>
</dbReference>
<dbReference type="RefSeq" id="WP_011788604.1">
    <property type="nucleotide sequence ID" value="NC_008750.1"/>
</dbReference>
<dbReference type="SMR" id="A1RHF2"/>
<dbReference type="KEGG" id="shw:Sputw3181_1254"/>
<dbReference type="HOGENOM" id="CLU_011675_5_0_6"/>
<dbReference type="UniPathway" id="UPA00159">
    <property type="reaction ID" value="UER00277"/>
</dbReference>
<dbReference type="Proteomes" id="UP000002597">
    <property type="component" value="Chromosome"/>
</dbReference>
<dbReference type="GO" id="GO:0005829">
    <property type="term" value="C:cytosol"/>
    <property type="evidence" value="ECO:0007669"/>
    <property type="project" value="TreeGrafter"/>
</dbReference>
<dbReference type="GO" id="GO:0005524">
    <property type="term" value="F:ATP binding"/>
    <property type="evidence" value="ECO:0007669"/>
    <property type="project" value="UniProtKB-KW"/>
</dbReference>
<dbReference type="GO" id="GO:0003883">
    <property type="term" value="F:CTP synthase activity"/>
    <property type="evidence" value="ECO:0007669"/>
    <property type="project" value="UniProtKB-UniRule"/>
</dbReference>
<dbReference type="GO" id="GO:0004359">
    <property type="term" value="F:glutaminase activity"/>
    <property type="evidence" value="ECO:0007669"/>
    <property type="project" value="RHEA"/>
</dbReference>
<dbReference type="GO" id="GO:0042802">
    <property type="term" value="F:identical protein binding"/>
    <property type="evidence" value="ECO:0007669"/>
    <property type="project" value="TreeGrafter"/>
</dbReference>
<dbReference type="GO" id="GO:0046872">
    <property type="term" value="F:metal ion binding"/>
    <property type="evidence" value="ECO:0007669"/>
    <property type="project" value="UniProtKB-KW"/>
</dbReference>
<dbReference type="GO" id="GO:0044210">
    <property type="term" value="P:'de novo' CTP biosynthetic process"/>
    <property type="evidence" value="ECO:0007669"/>
    <property type="project" value="UniProtKB-UniRule"/>
</dbReference>
<dbReference type="GO" id="GO:0019856">
    <property type="term" value="P:pyrimidine nucleobase biosynthetic process"/>
    <property type="evidence" value="ECO:0007669"/>
    <property type="project" value="TreeGrafter"/>
</dbReference>
<dbReference type="CDD" id="cd03113">
    <property type="entry name" value="CTPS_N"/>
    <property type="match status" value="1"/>
</dbReference>
<dbReference type="CDD" id="cd01746">
    <property type="entry name" value="GATase1_CTP_Synthase"/>
    <property type="match status" value="1"/>
</dbReference>
<dbReference type="FunFam" id="3.40.50.300:FF:000009">
    <property type="entry name" value="CTP synthase"/>
    <property type="match status" value="1"/>
</dbReference>
<dbReference type="FunFam" id="3.40.50.880:FF:000002">
    <property type="entry name" value="CTP synthase"/>
    <property type="match status" value="1"/>
</dbReference>
<dbReference type="Gene3D" id="3.40.50.880">
    <property type="match status" value="1"/>
</dbReference>
<dbReference type="Gene3D" id="3.40.50.300">
    <property type="entry name" value="P-loop containing nucleotide triphosphate hydrolases"/>
    <property type="match status" value="1"/>
</dbReference>
<dbReference type="HAMAP" id="MF_01227">
    <property type="entry name" value="PyrG"/>
    <property type="match status" value="1"/>
</dbReference>
<dbReference type="InterPro" id="IPR029062">
    <property type="entry name" value="Class_I_gatase-like"/>
</dbReference>
<dbReference type="InterPro" id="IPR004468">
    <property type="entry name" value="CTP_synthase"/>
</dbReference>
<dbReference type="InterPro" id="IPR017456">
    <property type="entry name" value="CTP_synthase_N"/>
</dbReference>
<dbReference type="InterPro" id="IPR017926">
    <property type="entry name" value="GATASE"/>
</dbReference>
<dbReference type="InterPro" id="IPR033828">
    <property type="entry name" value="GATase1_CTP_Synthase"/>
</dbReference>
<dbReference type="InterPro" id="IPR027417">
    <property type="entry name" value="P-loop_NTPase"/>
</dbReference>
<dbReference type="NCBIfam" id="NF003792">
    <property type="entry name" value="PRK05380.1"/>
    <property type="match status" value="1"/>
</dbReference>
<dbReference type="NCBIfam" id="TIGR00337">
    <property type="entry name" value="PyrG"/>
    <property type="match status" value="1"/>
</dbReference>
<dbReference type="PANTHER" id="PTHR11550">
    <property type="entry name" value="CTP SYNTHASE"/>
    <property type="match status" value="1"/>
</dbReference>
<dbReference type="PANTHER" id="PTHR11550:SF0">
    <property type="entry name" value="CTP SYNTHASE-RELATED"/>
    <property type="match status" value="1"/>
</dbReference>
<dbReference type="Pfam" id="PF06418">
    <property type="entry name" value="CTP_synth_N"/>
    <property type="match status" value="1"/>
</dbReference>
<dbReference type="Pfam" id="PF00117">
    <property type="entry name" value="GATase"/>
    <property type="match status" value="1"/>
</dbReference>
<dbReference type="SUPFAM" id="SSF52317">
    <property type="entry name" value="Class I glutamine amidotransferase-like"/>
    <property type="match status" value="1"/>
</dbReference>
<dbReference type="SUPFAM" id="SSF52540">
    <property type="entry name" value="P-loop containing nucleoside triphosphate hydrolases"/>
    <property type="match status" value="1"/>
</dbReference>
<dbReference type="PROSITE" id="PS51273">
    <property type="entry name" value="GATASE_TYPE_1"/>
    <property type="match status" value="1"/>
</dbReference>
<comment type="function">
    <text evidence="1">Catalyzes the ATP-dependent amination of UTP to CTP with either L-glutamine or ammonia as the source of nitrogen. Regulates intracellular CTP levels through interactions with the four ribonucleotide triphosphates.</text>
</comment>
<comment type="catalytic activity">
    <reaction evidence="1">
        <text>UTP + L-glutamine + ATP + H2O = CTP + L-glutamate + ADP + phosphate + 2 H(+)</text>
        <dbReference type="Rhea" id="RHEA:26426"/>
        <dbReference type="ChEBI" id="CHEBI:15377"/>
        <dbReference type="ChEBI" id="CHEBI:15378"/>
        <dbReference type="ChEBI" id="CHEBI:29985"/>
        <dbReference type="ChEBI" id="CHEBI:30616"/>
        <dbReference type="ChEBI" id="CHEBI:37563"/>
        <dbReference type="ChEBI" id="CHEBI:43474"/>
        <dbReference type="ChEBI" id="CHEBI:46398"/>
        <dbReference type="ChEBI" id="CHEBI:58359"/>
        <dbReference type="ChEBI" id="CHEBI:456216"/>
        <dbReference type="EC" id="6.3.4.2"/>
    </reaction>
</comment>
<comment type="catalytic activity">
    <reaction evidence="1">
        <text>L-glutamine + H2O = L-glutamate + NH4(+)</text>
        <dbReference type="Rhea" id="RHEA:15889"/>
        <dbReference type="ChEBI" id="CHEBI:15377"/>
        <dbReference type="ChEBI" id="CHEBI:28938"/>
        <dbReference type="ChEBI" id="CHEBI:29985"/>
        <dbReference type="ChEBI" id="CHEBI:58359"/>
    </reaction>
</comment>
<comment type="catalytic activity">
    <reaction evidence="1">
        <text>UTP + NH4(+) + ATP = CTP + ADP + phosphate + 2 H(+)</text>
        <dbReference type="Rhea" id="RHEA:16597"/>
        <dbReference type="ChEBI" id="CHEBI:15378"/>
        <dbReference type="ChEBI" id="CHEBI:28938"/>
        <dbReference type="ChEBI" id="CHEBI:30616"/>
        <dbReference type="ChEBI" id="CHEBI:37563"/>
        <dbReference type="ChEBI" id="CHEBI:43474"/>
        <dbReference type="ChEBI" id="CHEBI:46398"/>
        <dbReference type="ChEBI" id="CHEBI:456216"/>
    </reaction>
</comment>
<comment type="activity regulation">
    <text evidence="1">Allosterically activated by GTP, when glutamine is the substrate; GTP has no effect on the reaction when ammonia is the substrate. The allosteric effector GTP functions by stabilizing the protein conformation that binds the tetrahedral intermediate(s) formed during glutamine hydrolysis. Inhibited by the product CTP, via allosteric rather than competitive inhibition.</text>
</comment>
<comment type="pathway">
    <text evidence="1">Pyrimidine metabolism; CTP biosynthesis via de novo pathway; CTP from UDP: step 2/2.</text>
</comment>
<comment type="subunit">
    <text evidence="1">Homotetramer.</text>
</comment>
<comment type="miscellaneous">
    <text evidence="1">CTPSs have evolved a hybrid strategy for distinguishing between UTP and CTP. The overlapping regions of the product feedback inhibitory and substrate sites recognize a common feature in both compounds, the triphosphate moiety. To differentiate isosteric substrate and product pyrimidine rings, an additional pocket far from the expected kinase/ligase catalytic site, specifically recognizes the cytosine and ribose portions of the product inhibitor.</text>
</comment>
<comment type="similarity">
    <text evidence="1">Belongs to the CTP synthase family.</text>
</comment>
<accession>A1RHF2</accession>
<protein>
    <recommendedName>
        <fullName evidence="1">CTP synthase</fullName>
        <ecNumber evidence="1">6.3.4.2</ecNumber>
    </recommendedName>
    <alternativeName>
        <fullName evidence="1">Cytidine 5'-triphosphate synthase</fullName>
    </alternativeName>
    <alternativeName>
        <fullName evidence="1">Cytidine triphosphate synthetase</fullName>
        <shortName evidence="1">CTP synthetase</shortName>
        <shortName evidence="1">CTPS</shortName>
    </alternativeName>
    <alternativeName>
        <fullName evidence="1">UTP--ammonia ligase</fullName>
    </alternativeName>
</protein>
<organism>
    <name type="scientific">Shewanella sp. (strain W3-18-1)</name>
    <dbReference type="NCBI Taxonomy" id="351745"/>
    <lineage>
        <taxon>Bacteria</taxon>
        <taxon>Pseudomonadati</taxon>
        <taxon>Pseudomonadota</taxon>
        <taxon>Gammaproteobacteria</taxon>
        <taxon>Alteromonadales</taxon>
        <taxon>Shewanellaceae</taxon>
        <taxon>Shewanella</taxon>
    </lineage>
</organism>
<keyword id="KW-0067">ATP-binding</keyword>
<keyword id="KW-0315">Glutamine amidotransferase</keyword>
<keyword id="KW-0436">Ligase</keyword>
<keyword id="KW-0460">Magnesium</keyword>
<keyword id="KW-0479">Metal-binding</keyword>
<keyword id="KW-0547">Nucleotide-binding</keyword>
<keyword id="KW-0665">Pyrimidine biosynthesis</keyword>
<gene>
    <name evidence="1" type="primary">pyrG</name>
    <name type="ordered locus">Sputw3181_1254</name>
</gene>
<evidence type="ECO:0000255" key="1">
    <source>
        <dbReference type="HAMAP-Rule" id="MF_01227"/>
    </source>
</evidence>